<organism>
    <name type="scientific">Mus musculus</name>
    <name type="common">Mouse</name>
    <dbReference type="NCBI Taxonomy" id="10090"/>
    <lineage>
        <taxon>Eukaryota</taxon>
        <taxon>Metazoa</taxon>
        <taxon>Chordata</taxon>
        <taxon>Craniata</taxon>
        <taxon>Vertebrata</taxon>
        <taxon>Euteleostomi</taxon>
        <taxon>Mammalia</taxon>
        <taxon>Eutheria</taxon>
        <taxon>Euarchontoglires</taxon>
        <taxon>Glires</taxon>
        <taxon>Rodentia</taxon>
        <taxon>Myomorpha</taxon>
        <taxon>Muroidea</taxon>
        <taxon>Muridae</taxon>
        <taxon>Murinae</taxon>
        <taxon>Mus</taxon>
        <taxon>Mus</taxon>
    </lineage>
</organism>
<reference key="1">
    <citation type="journal article" date="2009" name="PLoS Biol.">
        <title>Lineage-specific biology revealed by a finished genome assembly of the mouse.</title>
        <authorList>
            <person name="Church D.M."/>
            <person name="Goodstadt L."/>
            <person name="Hillier L.W."/>
            <person name="Zody M.C."/>
            <person name="Goldstein S."/>
            <person name="She X."/>
            <person name="Bult C.J."/>
            <person name="Agarwala R."/>
            <person name="Cherry J.L."/>
            <person name="DiCuccio M."/>
            <person name="Hlavina W."/>
            <person name="Kapustin Y."/>
            <person name="Meric P."/>
            <person name="Maglott D."/>
            <person name="Birtle Z."/>
            <person name="Marques A.C."/>
            <person name="Graves T."/>
            <person name="Zhou S."/>
            <person name="Teague B."/>
            <person name="Potamousis K."/>
            <person name="Churas C."/>
            <person name="Place M."/>
            <person name="Herschleb J."/>
            <person name="Runnheim R."/>
            <person name="Forrest D."/>
            <person name="Amos-Landgraf J."/>
            <person name="Schwartz D.C."/>
            <person name="Cheng Z."/>
            <person name="Lindblad-Toh K."/>
            <person name="Eichler E.E."/>
            <person name="Ponting C.P."/>
        </authorList>
    </citation>
    <scope>NUCLEOTIDE SEQUENCE [LARGE SCALE GENOMIC DNA]</scope>
    <source>
        <strain>C57BL/6J</strain>
    </source>
</reference>
<reference key="2">
    <citation type="journal article" date="2004" name="Genome Res.">
        <title>The status, quality, and expansion of the NIH full-length cDNA project: the Mammalian Gene Collection (MGC).</title>
        <authorList>
            <consortium name="The MGC Project Team"/>
        </authorList>
    </citation>
    <scope>NUCLEOTIDE SEQUENCE [LARGE SCALE MRNA] (ISOFORM 1)</scope>
    <source>
        <tissue evidence="10">Brain</tissue>
    </source>
</reference>
<reference key="3">
    <citation type="journal article" date="2005" name="Science">
        <title>The transcriptional landscape of the mammalian genome.</title>
        <authorList>
            <person name="Carninci P."/>
            <person name="Kasukawa T."/>
            <person name="Katayama S."/>
            <person name="Gough J."/>
            <person name="Frith M.C."/>
            <person name="Maeda N."/>
            <person name="Oyama R."/>
            <person name="Ravasi T."/>
            <person name="Lenhard B."/>
            <person name="Wells C."/>
            <person name="Kodzius R."/>
            <person name="Shimokawa K."/>
            <person name="Bajic V.B."/>
            <person name="Brenner S.E."/>
            <person name="Batalov S."/>
            <person name="Forrest A.R."/>
            <person name="Zavolan M."/>
            <person name="Davis M.J."/>
            <person name="Wilming L.G."/>
            <person name="Aidinis V."/>
            <person name="Allen J.E."/>
            <person name="Ambesi-Impiombato A."/>
            <person name="Apweiler R."/>
            <person name="Aturaliya R.N."/>
            <person name="Bailey T.L."/>
            <person name="Bansal M."/>
            <person name="Baxter L."/>
            <person name="Beisel K.W."/>
            <person name="Bersano T."/>
            <person name="Bono H."/>
            <person name="Chalk A.M."/>
            <person name="Chiu K.P."/>
            <person name="Choudhary V."/>
            <person name="Christoffels A."/>
            <person name="Clutterbuck D.R."/>
            <person name="Crowe M.L."/>
            <person name="Dalla E."/>
            <person name="Dalrymple B.P."/>
            <person name="de Bono B."/>
            <person name="Della Gatta G."/>
            <person name="di Bernardo D."/>
            <person name="Down T."/>
            <person name="Engstrom P."/>
            <person name="Fagiolini M."/>
            <person name="Faulkner G."/>
            <person name="Fletcher C.F."/>
            <person name="Fukushima T."/>
            <person name="Furuno M."/>
            <person name="Futaki S."/>
            <person name="Gariboldi M."/>
            <person name="Georgii-Hemming P."/>
            <person name="Gingeras T.R."/>
            <person name="Gojobori T."/>
            <person name="Green R.E."/>
            <person name="Gustincich S."/>
            <person name="Harbers M."/>
            <person name="Hayashi Y."/>
            <person name="Hensch T.K."/>
            <person name="Hirokawa N."/>
            <person name="Hill D."/>
            <person name="Huminiecki L."/>
            <person name="Iacono M."/>
            <person name="Ikeo K."/>
            <person name="Iwama A."/>
            <person name="Ishikawa T."/>
            <person name="Jakt M."/>
            <person name="Kanapin A."/>
            <person name="Katoh M."/>
            <person name="Kawasawa Y."/>
            <person name="Kelso J."/>
            <person name="Kitamura H."/>
            <person name="Kitano H."/>
            <person name="Kollias G."/>
            <person name="Krishnan S.P."/>
            <person name="Kruger A."/>
            <person name="Kummerfeld S.K."/>
            <person name="Kurochkin I.V."/>
            <person name="Lareau L.F."/>
            <person name="Lazarevic D."/>
            <person name="Lipovich L."/>
            <person name="Liu J."/>
            <person name="Liuni S."/>
            <person name="McWilliam S."/>
            <person name="Madan Babu M."/>
            <person name="Madera M."/>
            <person name="Marchionni L."/>
            <person name="Matsuda H."/>
            <person name="Matsuzawa S."/>
            <person name="Miki H."/>
            <person name="Mignone F."/>
            <person name="Miyake S."/>
            <person name="Morris K."/>
            <person name="Mottagui-Tabar S."/>
            <person name="Mulder N."/>
            <person name="Nakano N."/>
            <person name="Nakauchi H."/>
            <person name="Ng P."/>
            <person name="Nilsson R."/>
            <person name="Nishiguchi S."/>
            <person name="Nishikawa S."/>
            <person name="Nori F."/>
            <person name="Ohara O."/>
            <person name="Okazaki Y."/>
            <person name="Orlando V."/>
            <person name="Pang K.C."/>
            <person name="Pavan W.J."/>
            <person name="Pavesi G."/>
            <person name="Pesole G."/>
            <person name="Petrovsky N."/>
            <person name="Piazza S."/>
            <person name="Reed J."/>
            <person name="Reid J.F."/>
            <person name="Ring B.Z."/>
            <person name="Ringwald M."/>
            <person name="Rost B."/>
            <person name="Ruan Y."/>
            <person name="Salzberg S.L."/>
            <person name="Sandelin A."/>
            <person name="Schneider C."/>
            <person name="Schoenbach C."/>
            <person name="Sekiguchi K."/>
            <person name="Semple C.A."/>
            <person name="Seno S."/>
            <person name="Sessa L."/>
            <person name="Sheng Y."/>
            <person name="Shibata Y."/>
            <person name="Shimada H."/>
            <person name="Shimada K."/>
            <person name="Silva D."/>
            <person name="Sinclair B."/>
            <person name="Sperling S."/>
            <person name="Stupka E."/>
            <person name="Sugiura K."/>
            <person name="Sultana R."/>
            <person name="Takenaka Y."/>
            <person name="Taki K."/>
            <person name="Tammoja K."/>
            <person name="Tan S.L."/>
            <person name="Tang S."/>
            <person name="Taylor M.S."/>
            <person name="Tegner J."/>
            <person name="Teichmann S.A."/>
            <person name="Ueda H.R."/>
            <person name="van Nimwegen E."/>
            <person name="Verardo R."/>
            <person name="Wei C.L."/>
            <person name="Yagi K."/>
            <person name="Yamanishi H."/>
            <person name="Zabarovsky E."/>
            <person name="Zhu S."/>
            <person name="Zimmer A."/>
            <person name="Hide W."/>
            <person name="Bult C."/>
            <person name="Grimmond S.M."/>
            <person name="Teasdale R.D."/>
            <person name="Liu E.T."/>
            <person name="Brusic V."/>
            <person name="Quackenbush J."/>
            <person name="Wahlestedt C."/>
            <person name="Mattick J.S."/>
            <person name="Hume D.A."/>
            <person name="Kai C."/>
            <person name="Sasaki D."/>
            <person name="Tomaru Y."/>
            <person name="Fukuda S."/>
            <person name="Kanamori-Katayama M."/>
            <person name="Suzuki M."/>
            <person name="Aoki J."/>
            <person name="Arakawa T."/>
            <person name="Iida J."/>
            <person name="Imamura K."/>
            <person name="Itoh M."/>
            <person name="Kato T."/>
            <person name="Kawaji H."/>
            <person name="Kawagashira N."/>
            <person name="Kawashima T."/>
            <person name="Kojima M."/>
            <person name="Kondo S."/>
            <person name="Konno H."/>
            <person name="Nakano K."/>
            <person name="Ninomiya N."/>
            <person name="Nishio T."/>
            <person name="Okada M."/>
            <person name="Plessy C."/>
            <person name="Shibata K."/>
            <person name="Shiraki T."/>
            <person name="Suzuki S."/>
            <person name="Tagami M."/>
            <person name="Waki K."/>
            <person name="Watahiki A."/>
            <person name="Okamura-Oho Y."/>
            <person name="Suzuki H."/>
            <person name="Kawai J."/>
            <person name="Hayashizaki Y."/>
        </authorList>
    </citation>
    <scope>NUCLEOTIDE SEQUENCE [LARGE SCALE MRNA] OF 496-1204 (ISOFORM 1)</scope>
    <source>
        <strain evidence="11">C57BL/6J</strain>
        <tissue evidence="11">Bone</tissue>
    </source>
</reference>
<reference evidence="13" key="4">
    <citation type="journal article" date="2010" name="Cell">
        <title>A tissue-specific atlas of mouse protein phosphorylation and expression.</title>
        <authorList>
            <person name="Huttlin E.L."/>
            <person name="Jedrychowski M.P."/>
            <person name="Elias J.E."/>
            <person name="Goswami T."/>
            <person name="Rad R."/>
            <person name="Beausoleil S.A."/>
            <person name="Villen J."/>
            <person name="Haas W."/>
            <person name="Sowa M.E."/>
            <person name="Gygi S.P."/>
        </authorList>
    </citation>
    <scope>IDENTIFICATION BY MASS SPECTROMETRY [LARGE SCALE ANALYSIS]</scope>
</reference>
<reference evidence="14" key="5">
    <citation type="journal article" date="2013" name="Mol. Cell">
        <title>SIRT5-mediated lysine desuccinylation impacts diverse metabolic pathways.</title>
        <authorList>
            <person name="Park J."/>
            <person name="Chen Y."/>
            <person name="Tishkoff D.X."/>
            <person name="Peng C."/>
            <person name="Tan M."/>
            <person name="Dai L."/>
            <person name="Xie Z."/>
            <person name="Zhang Y."/>
            <person name="Zwaans B.M."/>
            <person name="Skinner M.E."/>
            <person name="Lombard D.B."/>
            <person name="Zhao Y."/>
        </authorList>
    </citation>
    <scope>IDENTIFICATION BY MASS SPECTROMETRY [LARGE SCALE ANALYSIS]</scope>
</reference>
<reference key="6">
    <citation type="journal article" date="2016" name="J. Biol. Chem.">
        <title>The chromatin regulator BRPF3 preferentially activates the HBO1 acetyltransferase but is dispensable for mouse development and survival.</title>
        <authorList>
            <person name="Yan K."/>
            <person name="You L."/>
            <person name="Degerny C."/>
            <person name="Ghorbani M."/>
            <person name="Liu X."/>
            <person name="Chen L."/>
            <person name="Li L."/>
            <person name="Miao D."/>
            <person name="Yang X.J."/>
        </authorList>
    </citation>
    <scope>TISSUE SPECIFICITY</scope>
    <scope>DEVELOPMENTAL STAGE</scope>
    <scope>DISRUPTION PHENOTYPE</scope>
</reference>
<evidence type="ECO:0000250" key="1">
    <source>
        <dbReference type="UniProtKB" id="Q9ULD4"/>
    </source>
</evidence>
<evidence type="ECO:0000255" key="2">
    <source>
        <dbReference type="PROSITE-ProRule" id="PRU00035"/>
    </source>
</evidence>
<evidence type="ECO:0000255" key="3">
    <source>
        <dbReference type="PROSITE-ProRule" id="PRU00146"/>
    </source>
</evidence>
<evidence type="ECO:0000255" key="4">
    <source>
        <dbReference type="PROSITE-ProRule" id="PRU00162"/>
    </source>
</evidence>
<evidence type="ECO:0000255" key="5">
    <source>
        <dbReference type="PROSITE-ProRule" id="PRU01146"/>
    </source>
</evidence>
<evidence type="ECO:0000256" key="6">
    <source>
        <dbReference type="SAM" id="MobiDB-lite"/>
    </source>
</evidence>
<evidence type="ECO:0000269" key="7">
    <source>
    </source>
</evidence>
<evidence type="ECO:0000303" key="8">
    <source>
    </source>
</evidence>
<evidence type="ECO:0000305" key="9"/>
<evidence type="ECO:0000312" key="10">
    <source>
        <dbReference type="EMBL" id="AAI57916.1"/>
    </source>
</evidence>
<evidence type="ECO:0000312" key="11">
    <source>
        <dbReference type="EMBL" id="BAE37001.1"/>
    </source>
</evidence>
<evidence type="ECO:0000312" key="12">
    <source>
        <dbReference type="MGI" id="MGI:2146836"/>
    </source>
</evidence>
<evidence type="ECO:0007744" key="13">
    <source>
    </source>
</evidence>
<evidence type="ECO:0007744" key="14">
    <source>
    </source>
</evidence>
<feature type="chain" id="PRO_0000449611" description="Bromodomain and PHD finger-containing protein 3">
    <location>
        <begin position="1"/>
        <end position="1204"/>
    </location>
</feature>
<feature type="domain" description="Bromo" evidence="2">
    <location>
        <begin position="588"/>
        <end position="692"/>
    </location>
</feature>
<feature type="domain" description="PWWP" evidence="4">
    <location>
        <begin position="1075"/>
        <end position="1158"/>
    </location>
</feature>
<feature type="zinc finger region" description="PHD-type 1" evidence="3">
    <location>
        <begin position="212"/>
        <end position="262"/>
    </location>
</feature>
<feature type="zinc finger region" description="C2HC pre-PHD-type" evidence="5">
    <location>
        <begin position="266"/>
        <end position="299"/>
    </location>
</feature>
<feature type="zinc finger region" description="PHD-type 2" evidence="5">
    <location>
        <begin position="323"/>
        <end position="387"/>
    </location>
</feature>
<feature type="region of interest" description="Disordered" evidence="6">
    <location>
        <begin position="1"/>
        <end position="27"/>
    </location>
</feature>
<feature type="region of interest" description="Disordered" evidence="6">
    <location>
        <begin position="76"/>
        <end position="127"/>
    </location>
</feature>
<feature type="region of interest" description="Disordered" evidence="6">
    <location>
        <begin position="393"/>
        <end position="464"/>
    </location>
</feature>
<feature type="region of interest" description="Disordered" evidence="6">
    <location>
        <begin position="778"/>
        <end position="879"/>
    </location>
</feature>
<feature type="region of interest" description="Disordered" evidence="6">
    <location>
        <begin position="903"/>
        <end position="1015"/>
    </location>
</feature>
<feature type="compositionally biased region" description="Basic residues" evidence="6">
    <location>
        <begin position="89"/>
        <end position="99"/>
    </location>
</feature>
<feature type="compositionally biased region" description="Acidic residues" evidence="6">
    <location>
        <begin position="417"/>
        <end position="429"/>
    </location>
</feature>
<feature type="compositionally biased region" description="Basic residues" evidence="6">
    <location>
        <begin position="442"/>
        <end position="454"/>
    </location>
</feature>
<feature type="compositionally biased region" description="Acidic residues" evidence="6">
    <location>
        <begin position="816"/>
        <end position="826"/>
    </location>
</feature>
<feature type="compositionally biased region" description="Basic and acidic residues" evidence="6">
    <location>
        <begin position="979"/>
        <end position="990"/>
    </location>
</feature>
<feature type="modified residue" description="Phosphoserine" evidence="1">
    <location>
        <position position="399"/>
    </location>
</feature>
<feature type="modified residue" description="Phosphoserine" evidence="1">
    <location>
        <position position="402"/>
    </location>
</feature>
<feature type="modified residue" description="N6-acetyllysine" evidence="1">
    <location>
        <position position="445"/>
    </location>
</feature>
<feature type="modified residue" description="N6-acetyllysine" evidence="1">
    <location>
        <position position="447"/>
    </location>
</feature>
<feature type="modified residue" description="N6-acetyllysine" evidence="1">
    <location>
        <position position="670"/>
    </location>
</feature>
<feature type="modified residue" description="Phosphoserine" evidence="1">
    <location>
        <position position="712"/>
    </location>
</feature>
<feature type="modified residue" description="Phosphoserine" evidence="1">
    <location>
        <position position="739"/>
    </location>
</feature>
<feature type="modified residue" description="Phosphoserine" evidence="1">
    <location>
        <position position="899"/>
    </location>
</feature>
<feature type="modified residue" description="Phosphoserine" evidence="1">
    <location>
        <position position="961"/>
    </location>
</feature>
<feature type="modified residue" description="Phosphoserine" evidence="1">
    <location>
        <position position="964"/>
    </location>
</feature>
<feature type="splice variant" id="VSP_060569" description="In isoform 2.">
    <original>GRSLLMPFEDHGDLEPLELVWAKCRGYPSYPALIIDPKMPREGLLH</original>
    <variation>DHRSQDAPGGPPAQRCPHPCPSTGRAEAGRAEAGRGWREALSCPLL</variation>
    <location>
        <begin position="1060"/>
        <end position="1105"/>
    </location>
</feature>
<feature type="splice variant" id="VSP_060570" description="In isoform 2.">
    <location>
        <begin position="1106"/>
        <end position="1204"/>
    </location>
</feature>
<comment type="function">
    <text evidence="1">Scaffold subunit of various histone acetyltransferase (HAT) complexes, such as the MOZ/MORF and HBO1 complexes, which have a histone H3 acetyltransferase activity. Plays a role in DNA replication initiation by directing KAT7/HBO1 specificity towards histone H3 'Lys-14' acetylation (H3K14ac), thereby facilitating the activation of replication origins. Component of the MOZ/MORF complex which has a histone H3 acetyltransferase activity.</text>
</comment>
<comment type="subunit">
    <text evidence="1">Component of some HBO1 complexes composed of KAT7/HBO1, MEAF6, ING4 or ING5, and BRPF3. Component of the MOZ/MORF complex composed at least of ING5, KAT6A, KAT6B, MEAF6 and one of BRPF1, BRD1/BRPF2 and BRPF3. Interacts with KAT7/HBO1; the interaction is direct.</text>
</comment>
<comment type="subcellular location">
    <subcellularLocation>
        <location evidence="1">Nucleus</location>
    </subcellularLocation>
</comment>
<comment type="alternative products">
    <event type="alternative splicing"/>
    <isoform>
        <id>B2KF05-1</id>
        <name>1</name>
        <sequence type="displayed"/>
    </isoform>
    <isoform>
        <id>B2KF05-2</id>
        <name>2</name>
        <sequence type="described" ref="VSP_060569 VSP_060570"/>
    </isoform>
</comment>
<comment type="tissue specificity">
    <text evidence="7">Highly expressed in the adult testis and brain.</text>
</comment>
<comment type="developmental stage">
    <text evidence="7">Widely expressed in embryos at 12.5 dpc.</text>
</comment>
<comment type="disruption phenotype">
    <text evidence="7">No visible phenotype.</text>
</comment>
<comment type="sequence caution" evidence="9">
    <conflict type="erroneous initiation">
        <sequence resource="EMBL-CDS" id="BAE37001"/>
    </conflict>
    <text>Extended N-terminus.</text>
</comment>
<accession>B2KF05</accession>
<accession>A0A3B2WAQ0</accession>
<accession>Q3TRM7</accession>
<name>BRPF3_MOUSE</name>
<sequence length="1204" mass="135294">MRKPRRKSRQNAEGRRSPSPYSLKCSPTRETLTYAQAQRIVEVDIDGRLHRISIYDPLKIITEDELTAQDITECNSNKENSEQPQFPAKSKKPSSKGKRKESCSKHASGTSFHLPQPSFRVVDTGSQPEAPPLPAAYYRYIEKPPEDLDAEVEYDMDEEDIAWLDMVNEKRRADGHSSVSADTFELLVDRLEKESYLESRSSGAQQSLIDEDAFCCVCLDDECHNSNVILFCDICNLAVHQECYGVPYIPEGQWLCRCCLQSPSRPVDCVLCPNKGGAFKQTSDGHWAHVVCAIWIPEVCFANTVFLEPIEGIDNIPPARWKLTCYICKQKGLGAAIQCHKVNCYTAFHVTCAQRAGLFMKIEPMRETSLNGTTFTVRKTAYCEAHSPSVAVARRKGDSPRSLSEVGDEDGPKEGGGEEEQEEAEEEGQEGQGGVGSPLKGVSKKGKMSLKQKIKKEPEEAGREAPSITLPMVTVPQIPSYRLNKICSGLSFQRKTQFMQRLHNYWLLKRQARNGVPLIRRLHSHLQSQRNAEQREQDEKTSAVKEELKYWQKLRHDLERARLLIELIRKREKLKREQVKVQQAAMELELMPFTVLLRTTLDLLQEKDSAHIFAEPVSLSEVPDYLEFISKPMDFSTMRRKLESHLYHTLEEFEEDFNLIVTNCMKYNAKDTIFHRAAVRLRDLGGAILRHARRQAENIGYDPERGTHLPESPRLEDFYRFSWEDVDNILIPENRAHLSPEAQLKELLEKLDLVSTMRSSGARTRRVRMLRREINALRQKLAQPPPPQLLSLNKTVPNGELPAGSRGDTAVLEQAQQEEPEEEGDRDDSKLPAPPTLEPTGPAPSLSEQESPPDPPTLKPISDSKPSSRFLKSRKVEDEELLEKSALQLGSEPLQCLLSDNGIDRLSLTNPDSHPDTPLGTVGRRTSVLFKKAKNGVKLQRGPDGTLENGEDHGPEDDPASPASTEDEHYSRKRPRSRSCSDSEGERSPQQEEETGVTNGFGKHTESGSDSECSLGLSGGLAFEAGSGLTPPKRSRGKPALSRVPFLEGVNGDSDHSGSGRSLLMPFEDHGDLEPLELVWAKCRGYPSYPALIIDPKMPREGLLHNGVPIPVPPLDVLKLGEQKQAEAGERLFLVLFFDNKRTWQWLPRDKVLPLGVEDTVDKLKMLEGRKTSIRKSVQVAYDRAMIHLSRVRGSHAFVTSSYL</sequence>
<keyword id="KW-0007">Acetylation</keyword>
<keyword id="KW-0025">Alternative splicing</keyword>
<keyword id="KW-0103">Bromodomain</keyword>
<keyword id="KW-0156">Chromatin regulator</keyword>
<keyword id="KW-0479">Metal-binding</keyword>
<keyword id="KW-0539">Nucleus</keyword>
<keyword id="KW-0597">Phosphoprotein</keyword>
<keyword id="KW-1185">Reference proteome</keyword>
<keyword id="KW-0677">Repeat</keyword>
<keyword id="KW-0862">Zinc</keyword>
<keyword id="KW-0863">Zinc-finger</keyword>
<gene>
    <name evidence="8 12" type="primary">Brpf3</name>
</gene>
<protein>
    <recommendedName>
        <fullName evidence="8">Bromodomain and PHD finger-containing protein 3</fullName>
    </recommendedName>
</protein>
<proteinExistence type="evidence at protein level"/>
<dbReference type="EMBL" id="AC140278">
    <property type="status" value="NOT_ANNOTATED_CDS"/>
    <property type="molecule type" value="Genomic_DNA"/>
</dbReference>
<dbReference type="EMBL" id="BC157915">
    <property type="protein sequence ID" value="AAI57916.1"/>
    <property type="molecule type" value="mRNA"/>
</dbReference>
<dbReference type="EMBL" id="AK162638">
    <property type="protein sequence ID" value="BAE37001.1"/>
    <property type="status" value="ALT_INIT"/>
    <property type="molecule type" value="mRNA"/>
</dbReference>
<dbReference type="CCDS" id="CCDS37532.1">
    <molecule id="B2KF05-1"/>
</dbReference>
<dbReference type="RefSeq" id="NP_001074784.1">
    <molecule id="B2KF05-1"/>
    <property type="nucleotide sequence ID" value="NM_001081315.1"/>
</dbReference>
<dbReference type="RefSeq" id="XP_006524389.1">
    <molecule id="B2KF05-1"/>
    <property type="nucleotide sequence ID" value="XM_006524326.5"/>
</dbReference>
<dbReference type="RefSeq" id="XP_006524391.1">
    <molecule id="B2KF05-2"/>
    <property type="nucleotide sequence ID" value="XM_006524328.5"/>
</dbReference>
<dbReference type="RefSeq" id="XP_017172972.1">
    <property type="nucleotide sequence ID" value="XM_017317483.1"/>
</dbReference>
<dbReference type="RefSeq" id="XP_030105690.1">
    <molecule id="B2KF05-1"/>
    <property type="nucleotide sequence ID" value="XM_030249830.2"/>
</dbReference>
<dbReference type="SMR" id="B2KF05"/>
<dbReference type="ComplexPortal" id="CPX-802">
    <property type="entry name" value="MOZ3 histone acetyltransferase complex"/>
</dbReference>
<dbReference type="ComplexPortal" id="CPX-804">
    <property type="entry name" value="MORF3 histone acetyltransferase complex"/>
</dbReference>
<dbReference type="FunCoup" id="B2KF05">
    <property type="interactions" value="1740"/>
</dbReference>
<dbReference type="STRING" id="10090.ENSMUSP00000004985"/>
<dbReference type="iPTMnet" id="B2KF05"/>
<dbReference type="PhosphoSitePlus" id="B2KF05"/>
<dbReference type="PaxDb" id="10090-ENSMUSP00000004985"/>
<dbReference type="PeptideAtlas" id="B2KF05"/>
<dbReference type="ProteomicsDB" id="342883">
    <molecule id="B2KF05-1"/>
</dbReference>
<dbReference type="Pumba" id="B2KF05"/>
<dbReference type="Antibodypedia" id="15345">
    <property type="antibodies" value="78 antibodies from 19 providers"/>
</dbReference>
<dbReference type="DNASU" id="268936"/>
<dbReference type="Ensembl" id="ENSMUST00000004985.11">
    <molecule id="B2KF05-1"/>
    <property type="protein sequence ID" value="ENSMUSP00000004985.10"/>
    <property type="gene ID" value="ENSMUSG00000063952.17"/>
</dbReference>
<dbReference type="Ensembl" id="ENSMUST00000233701.2">
    <molecule id="B2KF05-2"/>
    <property type="protein sequence ID" value="ENSMUSP00000156455.2"/>
    <property type="gene ID" value="ENSMUSG00000063952.17"/>
</dbReference>
<dbReference type="GeneID" id="268936"/>
<dbReference type="KEGG" id="mmu:268936"/>
<dbReference type="UCSC" id="uc008brp.1">
    <molecule id="B2KF05-1"/>
    <property type="organism name" value="mouse"/>
</dbReference>
<dbReference type="UCSC" id="uc008brs.1">
    <property type="organism name" value="mouse"/>
</dbReference>
<dbReference type="AGR" id="MGI:2146836"/>
<dbReference type="CTD" id="27154"/>
<dbReference type="MGI" id="MGI:2146836">
    <property type="gene designation" value="Brpf3"/>
</dbReference>
<dbReference type="VEuPathDB" id="HostDB:ENSMUSG00000063952"/>
<dbReference type="eggNOG" id="KOG0955">
    <property type="taxonomic scope" value="Eukaryota"/>
</dbReference>
<dbReference type="GeneTree" id="ENSGT00940000155056"/>
<dbReference type="HOGENOM" id="CLU_003589_1_0_1"/>
<dbReference type="InParanoid" id="B2KF05"/>
<dbReference type="OMA" id="XRSLLMP"/>
<dbReference type="OrthoDB" id="20839at2759"/>
<dbReference type="PhylomeDB" id="B2KF05"/>
<dbReference type="TreeFam" id="TF316118"/>
<dbReference type="Reactome" id="R-MMU-114608">
    <property type="pathway name" value="Platelet degranulation"/>
</dbReference>
<dbReference type="Reactome" id="R-MMU-3214847">
    <property type="pathway name" value="HATs acetylate histones"/>
</dbReference>
<dbReference type="Reactome" id="R-MMU-6804758">
    <property type="pathway name" value="Regulation of TP53 Activity through Acetylation"/>
</dbReference>
<dbReference type="BioGRID-ORCS" id="268936">
    <property type="hits" value="4 hits in 84 CRISPR screens"/>
</dbReference>
<dbReference type="ChiTaRS" id="Brpf3">
    <property type="organism name" value="mouse"/>
</dbReference>
<dbReference type="PRO" id="PR:B2KF05"/>
<dbReference type="Proteomes" id="UP000000589">
    <property type="component" value="Chromosome 17"/>
</dbReference>
<dbReference type="RNAct" id="B2KF05">
    <property type="molecule type" value="protein"/>
</dbReference>
<dbReference type="Bgee" id="ENSMUSG00000063952">
    <property type="expression patterns" value="Expressed in animal zygote and 265 other cell types or tissues"/>
</dbReference>
<dbReference type="ExpressionAtlas" id="B2KF05">
    <property type="expression patterns" value="baseline and differential"/>
</dbReference>
<dbReference type="GO" id="GO:0000123">
    <property type="term" value="C:histone acetyltransferase complex"/>
    <property type="evidence" value="ECO:0000250"/>
    <property type="project" value="UniProtKB"/>
</dbReference>
<dbReference type="GO" id="GO:0070776">
    <property type="term" value="C:MOZ/MORF histone acetyltransferase complex"/>
    <property type="evidence" value="ECO:0000250"/>
    <property type="project" value="ComplexPortal"/>
</dbReference>
<dbReference type="GO" id="GO:0005634">
    <property type="term" value="C:nucleus"/>
    <property type="evidence" value="ECO:0000250"/>
    <property type="project" value="ComplexPortal"/>
</dbReference>
<dbReference type="GO" id="GO:0036408">
    <property type="term" value="F:histone H3K14 acetyltransferase activity"/>
    <property type="evidence" value="ECO:0007669"/>
    <property type="project" value="Ensembl"/>
</dbReference>
<dbReference type="GO" id="GO:0043997">
    <property type="term" value="F:histone H4K12 acetyltransferase activity"/>
    <property type="evidence" value="ECO:0007669"/>
    <property type="project" value="Ensembl"/>
</dbReference>
<dbReference type="GO" id="GO:0043995">
    <property type="term" value="F:histone H4K5 acetyltransferase activity"/>
    <property type="evidence" value="ECO:0007669"/>
    <property type="project" value="Ensembl"/>
</dbReference>
<dbReference type="GO" id="GO:0043996">
    <property type="term" value="F:histone H4K8 acetyltransferase activity"/>
    <property type="evidence" value="ECO:0007669"/>
    <property type="project" value="Ensembl"/>
</dbReference>
<dbReference type="GO" id="GO:0008270">
    <property type="term" value="F:zinc ion binding"/>
    <property type="evidence" value="ECO:0007669"/>
    <property type="project" value="UniProtKB-KW"/>
</dbReference>
<dbReference type="GO" id="GO:0045740">
    <property type="term" value="P:positive regulation of DNA replication"/>
    <property type="evidence" value="ECO:0000250"/>
    <property type="project" value="UniProtKB"/>
</dbReference>
<dbReference type="GO" id="GO:0050793">
    <property type="term" value="P:regulation of developmental process"/>
    <property type="evidence" value="ECO:0000303"/>
    <property type="project" value="ComplexPortal"/>
</dbReference>
<dbReference type="GO" id="GO:0006355">
    <property type="term" value="P:regulation of DNA-templated transcription"/>
    <property type="evidence" value="ECO:0000250"/>
    <property type="project" value="ComplexPortal"/>
</dbReference>
<dbReference type="GO" id="GO:1903706">
    <property type="term" value="P:regulation of hemopoiesis"/>
    <property type="evidence" value="ECO:0000303"/>
    <property type="project" value="ComplexPortal"/>
</dbReference>
<dbReference type="CDD" id="cd05512">
    <property type="entry name" value="Bromo_brd1_like"/>
    <property type="match status" value="1"/>
</dbReference>
<dbReference type="CDD" id="cd15703">
    <property type="entry name" value="ePHD_BRPF3"/>
    <property type="match status" value="1"/>
</dbReference>
<dbReference type="CDD" id="cd15572">
    <property type="entry name" value="PHD_BRPF"/>
    <property type="match status" value="1"/>
</dbReference>
<dbReference type="CDD" id="cd20158">
    <property type="entry name" value="PWWP_BRPF3"/>
    <property type="match status" value="1"/>
</dbReference>
<dbReference type="FunFam" id="3.30.40.10:FF:000008">
    <property type="entry name" value="Bromodomain containing 1, isoform CRA_a"/>
    <property type="match status" value="1"/>
</dbReference>
<dbReference type="FunFam" id="2.30.30.140:FF:000008">
    <property type="entry name" value="Bromodomain containing 1, isoform CRA_b"/>
    <property type="match status" value="1"/>
</dbReference>
<dbReference type="FunFam" id="3.30.40.10:FF:000007">
    <property type="entry name" value="Bromodomain containing 1, isoform CRA_b"/>
    <property type="match status" value="1"/>
</dbReference>
<dbReference type="FunFam" id="1.20.920.10:FF:000007">
    <property type="entry name" value="Bromodomain-containing protein 1"/>
    <property type="match status" value="1"/>
</dbReference>
<dbReference type="Gene3D" id="2.30.30.140">
    <property type="match status" value="1"/>
</dbReference>
<dbReference type="Gene3D" id="1.20.920.10">
    <property type="entry name" value="Bromodomain-like"/>
    <property type="match status" value="1"/>
</dbReference>
<dbReference type="Gene3D" id="3.30.40.10">
    <property type="entry name" value="Zinc/RING finger domain, C3HC4 (zinc finger)"/>
    <property type="match status" value="2"/>
</dbReference>
<dbReference type="InterPro" id="IPR001487">
    <property type="entry name" value="Bromodomain"/>
</dbReference>
<dbReference type="InterPro" id="IPR036427">
    <property type="entry name" value="Bromodomain-like_sf"/>
</dbReference>
<dbReference type="InterPro" id="IPR018359">
    <property type="entry name" value="Bromodomain_CS"/>
</dbReference>
<dbReference type="InterPro" id="IPR042005">
    <property type="entry name" value="BRPF3_ePHD"/>
</dbReference>
<dbReference type="InterPro" id="IPR019542">
    <property type="entry name" value="Enhancer_polycomb-like_N"/>
</dbReference>
<dbReference type="InterPro" id="IPR034732">
    <property type="entry name" value="EPHD"/>
</dbReference>
<dbReference type="InterPro" id="IPR050701">
    <property type="entry name" value="Histone_Mod_Regulator"/>
</dbReference>
<dbReference type="InterPro" id="IPR000313">
    <property type="entry name" value="PWWP_dom"/>
</dbReference>
<dbReference type="InterPro" id="IPR019786">
    <property type="entry name" value="Zinc_finger_PHD-type_CS"/>
</dbReference>
<dbReference type="InterPro" id="IPR011011">
    <property type="entry name" value="Znf_FYVE_PHD"/>
</dbReference>
<dbReference type="InterPro" id="IPR001965">
    <property type="entry name" value="Znf_PHD"/>
</dbReference>
<dbReference type="InterPro" id="IPR019787">
    <property type="entry name" value="Znf_PHD-finger"/>
</dbReference>
<dbReference type="InterPro" id="IPR013083">
    <property type="entry name" value="Znf_RING/FYVE/PHD"/>
</dbReference>
<dbReference type="PANTHER" id="PTHR13793:SF19">
    <property type="entry name" value="BROMODOMAIN AND PHD FINGER-CONTAINING PROTEIN 3"/>
    <property type="match status" value="1"/>
</dbReference>
<dbReference type="PANTHER" id="PTHR13793">
    <property type="entry name" value="PHD FINGER PROTEINS"/>
    <property type="match status" value="1"/>
</dbReference>
<dbReference type="Pfam" id="PF00439">
    <property type="entry name" value="Bromodomain"/>
    <property type="match status" value="1"/>
</dbReference>
<dbReference type="Pfam" id="PF10513">
    <property type="entry name" value="EPL1"/>
    <property type="match status" value="1"/>
</dbReference>
<dbReference type="Pfam" id="PF13831">
    <property type="entry name" value="PHD_2"/>
    <property type="match status" value="1"/>
</dbReference>
<dbReference type="Pfam" id="PF00855">
    <property type="entry name" value="PWWP"/>
    <property type="match status" value="1"/>
</dbReference>
<dbReference type="Pfam" id="PF13832">
    <property type="entry name" value="zf-HC5HC2H_2"/>
    <property type="match status" value="1"/>
</dbReference>
<dbReference type="PRINTS" id="PR00503">
    <property type="entry name" value="BROMODOMAIN"/>
</dbReference>
<dbReference type="SMART" id="SM00297">
    <property type="entry name" value="BROMO"/>
    <property type="match status" value="1"/>
</dbReference>
<dbReference type="SMART" id="SM00249">
    <property type="entry name" value="PHD"/>
    <property type="match status" value="2"/>
</dbReference>
<dbReference type="SMART" id="SM00293">
    <property type="entry name" value="PWWP"/>
    <property type="match status" value="1"/>
</dbReference>
<dbReference type="SUPFAM" id="SSF47370">
    <property type="entry name" value="Bromodomain"/>
    <property type="match status" value="1"/>
</dbReference>
<dbReference type="SUPFAM" id="SSF57903">
    <property type="entry name" value="FYVE/PHD zinc finger"/>
    <property type="match status" value="1"/>
</dbReference>
<dbReference type="SUPFAM" id="SSF63748">
    <property type="entry name" value="Tudor/PWWP/MBT"/>
    <property type="match status" value="1"/>
</dbReference>
<dbReference type="PROSITE" id="PS00633">
    <property type="entry name" value="BROMODOMAIN_1"/>
    <property type="match status" value="1"/>
</dbReference>
<dbReference type="PROSITE" id="PS50014">
    <property type="entry name" value="BROMODOMAIN_2"/>
    <property type="match status" value="1"/>
</dbReference>
<dbReference type="PROSITE" id="PS51805">
    <property type="entry name" value="EPHD"/>
    <property type="match status" value="1"/>
</dbReference>
<dbReference type="PROSITE" id="PS50812">
    <property type="entry name" value="PWWP"/>
    <property type="match status" value="1"/>
</dbReference>
<dbReference type="PROSITE" id="PS01359">
    <property type="entry name" value="ZF_PHD_1"/>
    <property type="match status" value="1"/>
</dbReference>
<dbReference type="PROSITE" id="PS50016">
    <property type="entry name" value="ZF_PHD_2"/>
    <property type="match status" value="1"/>
</dbReference>